<gene>
    <name evidence="1" type="primary">trmD</name>
    <name type="ordered locus">TWT_458</name>
</gene>
<comment type="function">
    <text evidence="1">Specifically methylates guanosine-37 in various tRNAs.</text>
</comment>
<comment type="catalytic activity">
    <reaction evidence="1">
        <text>guanosine(37) in tRNA + S-adenosyl-L-methionine = N(1)-methylguanosine(37) in tRNA + S-adenosyl-L-homocysteine + H(+)</text>
        <dbReference type="Rhea" id="RHEA:36899"/>
        <dbReference type="Rhea" id="RHEA-COMP:10145"/>
        <dbReference type="Rhea" id="RHEA-COMP:10147"/>
        <dbReference type="ChEBI" id="CHEBI:15378"/>
        <dbReference type="ChEBI" id="CHEBI:57856"/>
        <dbReference type="ChEBI" id="CHEBI:59789"/>
        <dbReference type="ChEBI" id="CHEBI:73542"/>
        <dbReference type="ChEBI" id="CHEBI:74269"/>
        <dbReference type="EC" id="2.1.1.228"/>
    </reaction>
</comment>
<comment type="subunit">
    <text evidence="1">Homodimer.</text>
</comment>
<comment type="subcellular location">
    <subcellularLocation>
        <location evidence="1">Cytoplasm</location>
    </subcellularLocation>
</comment>
<comment type="similarity">
    <text evidence="1">Belongs to the RNA methyltransferase TrmD family.</text>
</comment>
<feature type="chain" id="PRO_0000060490" description="tRNA (guanine-N(1)-)-methyltransferase">
    <location>
        <begin position="1"/>
        <end position="234"/>
    </location>
</feature>
<feature type="binding site" evidence="1">
    <location>
        <position position="110"/>
    </location>
    <ligand>
        <name>S-adenosyl-L-methionine</name>
        <dbReference type="ChEBI" id="CHEBI:59789"/>
    </ligand>
</feature>
<feature type="binding site" evidence="1">
    <location>
        <begin position="134"/>
        <end position="139"/>
    </location>
    <ligand>
        <name>S-adenosyl-L-methionine</name>
        <dbReference type="ChEBI" id="CHEBI:59789"/>
    </ligand>
</feature>
<organism>
    <name type="scientific">Tropheryma whipplei (strain Twist)</name>
    <name type="common">Whipple's bacillus</name>
    <dbReference type="NCBI Taxonomy" id="203267"/>
    <lineage>
        <taxon>Bacteria</taxon>
        <taxon>Bacillati</taxon>
        <taxon>Actinomycetota</taxon>
        <taxon>Actinomycetes</taxon>
        <taxon>Micrococcales</taxon>
        <taxon>Tropherymataceae</taxon>
        <taxon>Tropheryma</taxon>
    </lineage>
</organism>
<sequence>MFVMRCDFVSIFPEYFDVLDISLIGKARRNGLLDLRVHNLREYSEAGRVDSSPYGGGPGMVMSAEPWARAIEHIATGESLVVFPSPSGQPYSHDLAQSLSSEMHIVFCCGRYEGIDNRIYEWTATRLRSSGISIGDYVLNGGEIAALAILEGFVRFIPGVLGNPESLVEESYQYNLLEYPVYTKPAVWRGLEVPDILLSGNHDLIREWRYKKQLEITQKTRPDLYSTHIYETDS</sequence>
<reference key="1">
    <citation type="journal article" date="2003" name="Genome Res.">
        <title>Tropheryma whipplei twist: a human pathogenic Actinobacteria with a reduced genome.</title>
        <authorList>
            <person name="Raoult D."/>
            <person name="Ogata H."/>
            <person name="Audic S."/>
            <person name="Robert C."/>
            <person name="Suhre K."/>
            <person name="Drancourt M."/>
            <person name="Claverie J.-M."/>
        </authorList>
    </citation>
    <scope>NUCLEOTIDE SEQUENCE [LARGE SCALE GENOMIC DNA]</scope>
    <source>
        <strain>Twist</strain>
    </source>
</reference>
<name>TRMD_TROWT</name>
<evidence type="ECO:0000255" key="1">
    <source>
        <dbReference type="HAMAP-Rule" id="MF_00605"/>
    </source>
</evidence>
<protein>
    <recommendedName>
        <fullName evidence="1">tRNA (guanine-N(1)-)-methyltransferase</fullName>
        <ecNumber evidence="1">2.1.1.228</ecNumber>
    </recommendedName>
    <alternativeName>
        <fullName evidence="1">M1G-methyltransferase</fullName>
    </alternativeName>
    <alternativeName>
        <fullName evidence="1">tRNA [GM37] methyltransferase</fullName>
    </alternativeName>
</protein>
<dbReference type="EC" id="2.1.1.228" evidence="1"/>
<dbReference type="EMBL" id="AE014184">
    <property type="protein sequence ID" value="AAO44555.1"/>
    <property type="molecule type" value="Genomic_DNA"/>
</dbReference>
<dbReference type="SMR" id="Q820Y0"/>
<dbReference type="STRING" id="203267.TWT_458"/>
<dbReference type="KEGG" id="twh:TWT_458"/>
<dbReference type="eggNOG" id="COG0336">
    <property type="taxonomic scope" value="Bacteria"/>
</dbReference>
<dbReference type="HOGENOM" id="CLU_047363_0_1_11"/>
<dbReference type="Proteomes" id="UP000002200">
    <property type="component" value="Chromosome"/>
</dbReference>
<dbReference type="GO" id="GO:0005829">
    <property type="term" value="C:cytosol"/>
    <property type="evidence" value="ECO:0007669"/>
    <property type="project" value="TreeGrafter"/>
</dbReference>
<dbReference type="GO" id="GO:0052906">
    <property type="term" value="F:tRNA (guanine(37)-N1)-methyltransferase activity"/>
    <property type="evidence" value="ECO:0007669"/>
    <property type="project" value="UniProtKB-UniRule"/>
</dbReference>
<dbReference type="GO" id="GO:0002939">
    <property type="term" value="P:tRNA N1-guanine methylation"/>
    <property type="evidence" value="ECO:0007669"/>
    <property type="project" value="TreeGrafter"/>
</dbReference>
<dbReference type="CDD" id="cd18080">
    <property type="entry name" value="TrmD-like"/>
    <property type="match status" value="1"/>
</dbReference>
<dbReference type="Gene3D" id="3.40.1280.10">
    <property type="match status" value="1"/>
</dbReference>
<dbReference type="Gene3D" id="1.10.1270.20">
    <property type="entry name" value="tRNA(m1g37)methyltransferase, domain 2"/>
    <property type="match status" value="1"/>
</dbReference>
<dbReference type="HAMAP" id="MF_00605">
    <property type="entry name" value="TrmD"/>
    <property type="match status" value="1"/>
</dbReference>
<dbReference type="InterPro" id="IPR029028">
    <property type="entry name" value="Alpha/beta_knot_MTases"/>
</dbReference>
<dbReference type="InterPro" id="IPR023148">
    <property type="entry name" value="tRNA_m1G_MeTrfase_C_sf"/>
</dbReference>
<dbReference type="InterPro" id="IPR002649">
    <property type="entry name" value="tRNA_m1G_MeTrfase_TrmD"/>
</dbReference>
<dbReference type="InterPro" id="IPR029026">
    <property type="entry name" value="tRNA_m1G_MTases_N"/>
</dbReference>
<dbReference type="InterPro" id="IPR016009">
    <property type="entry name" value="tRNA_MeTrfase_TRMD/TRM10"/>
</dbReference>
<dbReference type="NCBIfam" id="NF000648">
    <property type="entry name" value="PRK00026.1"/>
    <property type="match status" value="1"/>
</dbReference>
<dbReference type="NCBIfam" id="TIGR00088">
    <property type="entry name" value="trmD"/>
    <property type="match status" value="1"/>
</dbReference>
<dbReference type="PANTHER" id="PTHR46417">
    <property type="entry name" value="TRNA (GUANINE-N(1)-)-METHYLTRANSFERASE"/>
    <property type="match status" value="1"/>
</dbReference>
<dbReference type="PANTHER" id="PTHR46417:SF1">
    <property type="entry name" value="TRNA (GUANINE-N(1)-)-METHYLTRANSFERASE"/>
    <property type="match status" value="1"/>
</dbReference>
<dbReference type="Pfam" id="PF01746">
    <property type="entry name" value="tRNA_m1G_MT"/>
    <property type="match status" value="1"/>
</dbReference>
<dbReference type="PIRSF" id="PIRSF000386">
    <property type="entry name" value="tRNA_mtase"/>
    <property type="match status" value="1"/>
</dbReference>
<dbReference type="SUPFAM" id="SSF75217">
    <property type="entry name" value="alpha/beta knot"/>
    <property type="match status" value="1"/>
</dbReference>
<proteinExistence type="inferred from homology"/>
<keyword id="KW-0963">Cytoplasm</keyword>
<keyword id="KW-0489">Methyltransferase</keyword>
<keyword id="KW-1185">Reference proteome</keyword>
<keyword id="KW-0949">S-adenosyl-L-methionine</keyword>
<keyword id="KW-0808">Transferase</keyword>
<keyword id="KW-0819">tRNA processing</keyword>
<accession>Q820Y0</accession>